<accession>Q93099</accession>
<accession>A8K417</accession>
<accession>B2R8Z0</accession>
<protein>
    <recommendedName>
        <fullName>Homogentisate 1,2-dioxygenase</fullName>
        <ecNumber evidence="14">1.13.11.5</ecNumber>
    </recommendedName>
    <alternativeName>
        <fullName>Homogentisate oxygenase</fullName>
    </alternativeName>
    <alternativeName>
        <fullName>Homogentisic acid oxidase</fullName>
    </alternativeName>
    <alternativeName>
        <fullName>Homogentisicase</fullName>
    </alternativeName>
</protein>
<comment type="function">
    <text evidence="14">Catalyzes the conversion of homogentisate to maleylacetoacetate.</text>
</comment>
<comment type="catalytic activity">
    <reaction evidence="14">
        <text>homogentisate + O2 = 4-maleylacetoacetate + H(+)</text>
        <dbReference type="Rhea" id="RHEA:15449"/>
        <dbReference type="ChEBI" id="CHEBI:15378"/>
        <dbReference type="ChEBI" id="CHEBI:15379"/>
        <dbReference type="ChEBI" id="CHEBI:16169"/>
        <dbReference type="ChEBI" id="CHEBI:17105"/>
        <dbReference type="EC" id="1.13.11.5"/>
    </reaction>
    <physiologicalReaction direction="left-to-right" evidence="22">
        <dbReference type="Rhea" id="RHEA:15450"/>
    </physiologicalReaction>
</comment>
<comment type="cofactor">
    <cofactor evidence="6">
        <name>Fe cation</name>
        <dbReference type="ChEBI" id="CHEBI:24875"/>
    </cofactor>
</comment>
<comment type="pathway">
    <text>Amino-acid degradation; L-phenylalanine degradation; acetoacetate and fumarate from L-phenylalanine: step 4/6.</text>
</comment>
<comment type="subunit">
    <text evidence="6">Homohexamer arranged as a dimer of trimers.</text>
</comment>
<comment type="interaction">
    <interactant intactId="EBI-3907760">
        <id>Q93099</id>
    </interactant>
    <interactant intactId="EBI-3907760">
        <id>Q93099</id>
        <label>HGD</label>
    </interactant>
    <organismsDiffer>false</organismsDiffer>
    <experiments>4</experiments>
</comment>
<comment type="interaction">
    <interactant intactId="EBI-3907760">
        <id>Q93099</id>
    </interactant>
    <interactant intactId="EBI-741158">
        <id>Q96HA8</id>
        <label>NTAQ1</label>
    </interactant>
    <organismsDiffer>false</organismsDiffer>
    <experiments>3</experiments>
</comment>
<comment type="interaction">
    <interactant intactId="EBI-3907760">
        <id>Q93099</id>
    </interactant>
    <interactant intactId="EBI-710997">
        <id>P54274</id>
        <label>TERF1</label>
    </interactant>
    <organismsDiffer>false</organismsDiffer>
    <experiments>2</experiments>
</comment>
<comment type="tissue specificity">
    <text>Highest expression in the prostate, small intestine, colon, kidney and liver.</text>
</comment>
<comment type="disease" evidence="2 3 4 5 9 10 11 12 13 14 15 17 18">
    <disease id="DI-00077">
        <name>Alkaptonuria</name>
        <acronym>AKU</acronym>
        <description>An autosomal recessive error of metabolism characterized by an increase in the level of homogentisic acid. The clinical manifestations are urine that turns dark on standing and alkalinization, black ochronotic pigmentation of cartilage and collagenous tissues, and spine arthritis.</description>
        <dbReference type="MIM" id="203500"/>
    </disease>
    <text>The disease is caused by variants affecting the gene represented in this entry.</text>
</comment>
<comment type="similarity">
    <text evidence="21">Belongs to the homogentisate dioxygenase family.</text>
</comment>
<sequence>MAELKYISGFGNECSSEDPRCPGSLPEGQNNPQVCPYNLYAEQLSGSAFTCPRSTNKRSWLYRILPSVSHKPFESIDEGQVTHNWDEVDPDPNQLRWKPFEIPKASQKKVDFVSGLHTLCGAGDIKSNNGLAIHIFLCNTSMENRCFYNSDGDFLIVPQKGNLLIYTEFGKMLVQPNEICVIQRGMRFSIDVFEETRGYILEVYGVHFELPDLGPIGANGLANPRDFLIPIAWYEDRQVPGGYTVINKYQGKLFAAKQDVSPFNVVAWHGNYTPYKYNLKNFMVINSVAFDHADPSIFTVLTAKSVRPGVAIADFVIFPPRWGVADKTFRPPYYHRNCMSEFMGLIRGHYEAKQGGFLPGGGSLHSTMTPHGPDADCFEKASKVKLAPERIADGTMAFMFESSLSLAVTKWGLKASRCLDENYHKCWEPLKSHFTPNSRNPAEPN</sequence>
<keyword id="KW-0002">3D-structure</keyword>
<keyword id="KW-0007">Acetylation</keyword>
<keyword id="KW-0223">Dioxygenase</keyword>
<keyword id="KW-0225">Disease variant</keyword>
<keyword id="KW-0408">Iron</keyword>
<keyword id="KW-0479">Metal-binding</keyword>
<keyword id="KW-0560">Oxidoreductase</keyword>
<keyword id="KW-0585">Phenylalanine catabolism</keyword>
<keyword id="KW-1267">Proteomics identification</keyword>
<keyword id="KW-1185">Reference proteome</keyword>
<keyword id="KW-0828">Tyrosine catabolism</keyword>
<reference key="1">
    <citation type="journal article" date="1996" name="Nat. Genet.">
        <title>The molecular basis of alkaptonuria.</title>
        <authorList>
            <person name="Fernandez-Canon J.M."/>
            <person name="Granadino B."/>
            <person name="Beltran-Valero de Bernabe D."/>
            <person name="Renedo M."/>
            <person name="Fernandez-Ruiz E."/>
            <person name="Penalva M.A."/>
            <person name="Rodriguez de Cordoba S."/>
        </authorList>
    </citation>
    <scope>NUCLEOTIDE SEQUENCE [MRNA]</scope>
    <scope>VARIANTS AKU SER-230 AND GLY-300</scope>
    <scope>VARIANT HIS-80</scope>
    <scope>CHARACTERIZATION OF VARIANT AKU SER-230</scope>
    <scope>FUNCTION</scope>
    <scope>CATALYTIC ACTIVITY</scope>
</reference>
<reference key="2">
    <citation type="submission" date="1996-09" db="EMBL/GenBank/DDBJ databases">
        <title>Homogentisate 1,2-dioxygenase human cDNA sequence.</title>
        <authorList>
            <person name="Ramos S."/>
            <person name="Hernandez M."/>
            <person name="Rozes A."/>
            <person name="Larruga J."/>
            <person name="Gonzalez P."/>
            <person name="Cabrera V.M."/>
        </authorList>
    </citation>
    <scope>NUCLEOTIDE SEQUENCE [MRNA]</scope>
    <scope>VARIANT HIS-80</scope>
    <source>
        <tissue>Liver</tissue>
    </source>
</reference>
<reference key="3">
    <citation type="journal article" date="1997" name="Genomics">
        <title>The human homogentisate 1,2-dioxygenase (HGO) gene.</title>
        <authorList>
            <person name="Granadino B."/>
            <person name="Beltran-Valero de Bernabe D."/>
            <person name="Fernandez-Canon J.M."/>
            <person name="Penalva M.A."/>
            <person name="Rodriguez de Cordoba S."/>
        </authorList>
    </citation>
    <scope>NUCLEOTIDE SEQUENCE [GENOMIC DNA]</scope>
    <scope>VARIANT HIS-80</scope>
</reference>
<reference key="4">
    <citation type="journal article" date="2004" name="Nat. Genet.">
        <title>Complete sequencing and characterization of 21,243 full-length human cDNAs.</title>
        <authorList>
            <person name="Ota T."/>
            <person name="Suzuki Y."/>
            <person name="Nishikawa T."/>
            <person name="Otsuki T."/>
            <person name="Sugiyama T."/>
            <person name="Irie R."/>
            <person name="Wakamatsu A."/>
            <person name="Hayashi K."/>
            <person name="Sato H."/>
            <person name="Nagai K."/>
            <person name="Kimura K."/>
            <person name="Makita H."/>
            <person name="Sekine M."/>
            <person name="Obayashi M."/>
            <person name="Nishi T."/>
            <person name="Shibahara T."/>
            <person name="Tanaka T."/>
            <person name="Ishii S."/>
            <person name="Yamamoto J."/>
            <person name="Saito K."/>
            <person name="Kawai Y."/>
            <person name="Isono Y."/>
            <person name="Nakamura Y."/>
            <person name="Nagahari K."/>
            <person name="Murakami K."/>
            <person name="Yasuda T."/>
            <person name="Iwayanagi T."/>
            <person name="Wagatsuma M."/>
            <person name="Shiratori A."/>
            <person name="Sudo H."/>
            <person name="Hosoiri T."/>
            <person name="Kaku Y."/>
            <person name="Kodaira H."/>
            <person name="Kondo H."/>
            <person name="Sugawara M."/>
            <person name="Takahashi M."/>
            <person name="Kanda K."/>
            <person name="Yokoi T."/>
            <person name="Furuya T."/>
            <person name="Kikkawa E."/>
            <person name="Omura Y."/>
            <person name="Abe K."/>
            <person name="Kamihara K."/>
            <person name="Katsuta N."/>
            <person name="Sato K."/>
            <person name="Tanikawa M."/>
            <person name="Yamazaki M."/>
            <person name="Ninomiya K."/>
            <person name="Ishibashi T."/>
            <person name="Yamashita H."/>
            <person name="Murakawa K."/>
            <person name="Fujimori K."/>
            <person name="Tanai H."/>
            <person name="Kimata M."/>
            <person name="Watanabe M."/>
            <person name="Hiraoka S."/>
            <person name="Chiba Y."/>
            <person name="Ishida S."/>
            <person name="Ono Y."/>
            <person name="Takiguchi S."/>
            <person name="Watanabe S."/>
            <person name="Yosida M."/>
            <person name="Hotuta T."/>
            <person name="Kusano J."/>
            <person name="Kanehori K."/>
            <person name="Takahashi-Fujii A."/>
            <person name="Hara H."/>
            <person name="Tanase T.-O."/>
            <person name="Nomura Y."/>
            <person name="Togiya S."/>
            <person name="Komai F."/>
            <person name="Hara R."/>
            <person name="Takeuchi K."/>
            <person name="Arita M."/>
            <person name="Imose N."/>
            <person name="Musashino K."/>
            <person name="Yuuki H."/>
            <person name="Oshima A."/>
            <person name="Sasaki N."/>
            <person name="Aotsuka S."/>
            <person name="Yoshikawa Y."/>
            <person name="Matsunawa H."/>
            <person name="Ichihara T."/>
            <person name="Shiohata N."/>
            <person name="Sano S."/>
            <person name="Moriya S."/>
            <person name="Momiyama H."/>
            <person name="Satoh N."/>
            <person name="Takami S."/>
            <person name="Terashima Y."/>
            <person name="Suzuki O."/>
            <person name="Nakagawa S."/>
            <person name="Senoh A."/>
            <person name="Mizoguchi H."/>
            <person name="Goto Y."/>
            <person name="Shimizu F."/>
            <person name="Wakebe H."/>
            <person name="Hishigaki H."/>
            <person name="Watanabe T."/>
            <person name="Sugiyama A."/>
            <person name="Takemoto M."/>
            <person name="Kawakami B."/>
            <person name="Yamazaki M."/>
            <person name="Watanabe K."/>
            <person name="Kumagai A."/>
            <person name="Itakura S."/>
            <person name="Fukuzumi Y."/>
            <person name="Fujimori Y."/>
            <person name="Komiyama M."/>
            <person name="Tashiro H."/>
            <person name="Tanigami A."/>
            <person name="Fujiwara T."/>
            <person name="Ono T."/>
            <person name="Yamada K."/>
            <person name="Fujii Y."/>
            <person name="Ozaki K."/>
            <person name="Hirao M."/>
            <person name="Ohmori Y."/>
            <person name="Kawabata A."/>
            <person name="Hikiji T."/>
            <person name="Kobatake N."/>
            <person name="Inagaki H."/>
            <person name="Ikema Y."/>
            <person name="Okamoto S."/>
            <person name="Okitani R."/>
            <person name="Kawakami T."/>
            <person name="Noguchi S."/>
            <person name="Itoh T."/>
            <person name="Shigeta K."/>
            <person name="Senba T."/>
            <person name="Matsumura K."/>
            <person name="Nakajima Y."/>
            <person name="Mizuno T."/>
            <person name="Morinaga M."/>
            <person name="Sasaki M."/>
            <person name="Togashi T."/>
            <person name="Oyama M."/>
            <person name="Hata H."/>
            <person name="Watanabe M."/>
            <person name="Komatsu T."/>
            <person name="Mizushima-Sugano J."/>
            <person name="Satoh T."/>
            <person name="Shirai Y."/>
            <person name="Takahashi Y."/>
            <person name="Nakagawa K."/>
            <person name="Okumura K."/>
            <person name="Nagase T."/>
            <person name="Nomura N."/>
            <person name="Kikuchi H."/>
            <person name="Masuho Y."/>
            <person name="Yamashita R."/>
            <person name="Nakai K."/>
            <person name="Yada T."/>
            <person name="Nakamura Y."/>
            <person name="Ohara O."/>
            <person name="Isogai T."/>
            <person name="Sugano S."/>
        </authorList>
    </citation>
    <scope>NUCLEOTIDE SEQUENCE [LARGE SCALE MRNA]</scope>
    <scope>VARIANT HIS-80</scope>
    <source>
        <tissue>Kidney</tissue>
        <tissue>Prostate</tissue>
    </source>
</reference>
<reference key="5">
    <citation type="journal article" date="2006" name="Nature">
        <title>The DNA sequence, annotation and analysis of human chromosome 3.</title>
        <authorList>
            <person name="Muzny D.M."/>
            <person name="Scherer S.E."/>
            <person name="Kaul R."/>
            <person name="Wang J."/>
            <person name="Yu J."/>
            <person name="Sudbrak R."/>
            <person name="Buhay C.J."/>
            <person name="Chen R."/>
            <person name="Cree A."/>
            <person name="Ding Y."/>
            <person name="Dugan-Rocha S."/>
            <person name="Gill R."/>
            <person name="Gunaratne P."/>
            <person name="Harris R.A."/>
            <person name="Hawes A.C."/>
            <person name="Hernandez J."/>
            <person name="Hodgson A.V."/>
            <person name="Hume J."/>
            <person name="Jackson A."/>
            <person name="Khan Z.M."/>
            <person name="Kovar-Smith C."/>
            <person name="Lewis L.R."/>
            <person name="Lozado R.J."/>
            <person name="Metzker M.L."/>
            <person name="Milosavljevic A."/>
            <person name="Miner G.R."/>
            <person name="Morgan M.B."/>
            <person name="Nazareth L.V."/>
            <person name="Scott G."/>
            <person name="Sodergren E."/>
            <person name="Song X.-Z."/>
            <person name="Steffen D."/>
            <person name="Wei S."/>
            <person name="Wheeler D.A."/>
            <person name="Wright M.W."/>
            <person name="Worley K.C."/>
            <person name="Yuan Y."/>
            <person name="Zhang Z."/>
            <person name="Adams C.Q."/>
            <person name="Ansari-Lari M.A."/>
            <person name="Ayele M."/>
            <person name="Brown M.J."/>
            <person name="Chen G."/>
            <person name="Chen Z."/>
            <person name="Clendenning J."/>
            <person name="Clerc-Blankenburg K.P."/>
            <person name="Chen R."/>
            <person name="Chen Z."/>
            <person name="Davis C."/>
            <person name="Delgado O."/>
            <person name="Dinh H.H."/>
            <person name="Dong W."/>
            <person name="Draper H."/>
            <person name="Ernst S."/>
            <person name="Fu G."/>
            <person name="Gonzalez-Garay M.L."/>
            <person name="Garcia D.K."/>
            <person name="Gillett W."/>
            <person name="Gu J."/>
            <person name="Hao B."/>
            <person name="Haugen E."/>
            <person name="Havlak P."/>
            <person name="He X."/>
            <person name="Hennig S."/>
            <person name="Hu S."/>
            <person name="Huang W."/>
            <person name="Jackson L.R."/>
            <person name="Jacob L.S."/>
            <person name="Kelly S.H."/>
            <person name="Kube M."/>
            <person name="Levy R."/>
            <person name="Li Z."/>
            <person name="Liu B."/>
            <person name="Liu J."/>
            <person name="Liu W."/>
            <person name="Lu J."/>
            <person name="Maheshwari M."/>
            <person name="Nguyen B.-V."/>
            <person name="Okwuonu G.O."/>
            <person name="Palmeiri A."/>
            <person name="Pasternak S."/>
            <person name="Perez L.M."/>
            <person name="Phelps K.A."/>
            <person name="Plopper F.J."/>
            <person name="Qiang B."/>
            <person name="Raymond C."/>
            <person name="Rodriguez R."/>
            <person name="Saenphimmachak C."/>
            <person name="Santibanez J."/>
            <person name="Shen H."/>
            <person name="Shen Y."/>
            <person name="Subramanian S."/>
            <person name="Tabor P.E."/>
            <person name="Verduzco D."/>
            <person name="Waldron L."/>
            <person name="Wang J."/>
            <person name="Wang J."/>
            <person name="Wang Q."/>
            <person name="Williams G.A."/>
            <person name="Wong G.K.-S."/>
            <person name="Yao Z."/>
            <person name="Zhang J."/>
            <person name="Zhang X."/>
            <person name="Zhao G."/>
            <person name="Zhou J."/>
            <person name="Zhou Y."/>
            <person name="Nelson D."/>
            <person name="Lehrach H."/>
            <person name="Reinhardt R."/>
            <person name="Naylor S.L."/>
            <person name="Yang H."/>
            <person name="Olson M."/>
            <person name="Weinstock G."/>
            <person name="Gibbs R.A."/>
        </authorList>
    </citation>
    <scope>NUCLEOTIDE SEQUENCE [LARGE SCALE GENOMIC DNA]</scope>
</reference>
<reference key="6">
    <citation type="submission" date="2005-09" db="EMBL/GenBank/DDBJ databases">
        <authorList>
            <person name="Mural R.J."/>
            <person name="Istrail S."/>
            <person name="Sutton G.G."/>
            <person name="Florea L."/>
            <person name="Halpern A.L."/>
            <person name="Mobarry C.M."/>
            <person name="Lippert R."/>
            <person name="Walenz B."/>
            <person name="Shatkay H."/>
            <person name="Dew I."/>
            <person name="Miller J.R."/>
            <person name="Flanigan M.J."/>
            <person name="Edwards N.J."/>
            <person name="Bolanos R."/>
            <person name="Fasulo D."/>
            <person name="Halldorsson B.V."/>
            <person name="Hannenhalli S."/>
            <person name="Turner R."/>
            <person name="Yooseph S."/>
            <person name="Lu F."/>
            <person name="Nusskern D.R."/>
            <person name="Shue B.C."/>
            <person name="Zheng X.H."/>
            <person name="Zhong F."/>
            <person name="Delcher A.L."/>
            <person name="Huson D.H."/>
            <person name="Kravitz S.A."/>
            <person name="Mouchard L."/>
            <person name="Reinert K."/>
            <person name="Remington K.A."/>
            <person name="Clark A.G."/>
            <person name="Waterman M.S."/>
            <person name="Eichler E.E."/>
            <person name="Adams M.D."/>
            <person name="Hunkapiller M.W."/>
            <person name="Myers E.W."/>
            <person name="Venter J.C."/>
        </authorList>
    </citation>
    <scope>NUCLEOTIDE SEQUENCE [LARGE SCALE GENOMIC DNA]</scope>
    <scope>VARIANT HIS-80</scope>
</reference>
<reference key="7">
    <citation type="journal article" date="2004" name="Genome Res.">
        <title>The status, quality, and expansion of the NIH full-length cDNA project: the Mammalian Gene Collection (MGC).</title>
        <authorList>
            <consortium name="The MGC Project Team"/>
        </authorList>
    </citation>
    <scope>NUCLEOTIDE SEQUENCE [LARGE SCALE MRNA]</scope>
    <scope>VARIANT HIS-80</scope>
</reference>
<reference key="8">
    <citation type="journal article" date="2009" name="Science">
        <title>Lysine acetylation targets protein complexes and co-regulates major cellular functions.</title>
        <authorList>
            <person name="Choudhary C."/>
            <person name="Kumar C."/>
            <person name="Gnad F."/>
            <person name="Nielsen M.L."/>
            <person name="Rehman M."/>
            <person name="Walther T.C."/>
            <person name="Olsen J.V."/>
            <person name="Mann M."/>
        </authorList>
    </citation>
    <scope>ACETYLATION [LARGE SCALE ANALYSIS] AT LYS-98</scope>
    <scope>IDENTIFICATION BY MASS SPECTROMETRY [LARGE SCALE ANALYSIS]</scope>
</reference>
<reference key="9">
    <citation type="journal article" date="2011" name="BMC Syst. Biol.">
        <title>Initial characterization of the human central proteome.</title>
        <authorList>
            <person name="Burkard T.R."/>
            <person name="Planyavsky M."/>
            <person name="Kaupe I."/>
            <person name="Breitwieser F.P."/>
            <person name="Buerckstuemmer T."/>
            <person name="Bennett K.L."/>
            <person name="Superti-Furga G."/>
            <person name="Colinge J."/>
        </authorList>
    </citation>
    <scope>IDENTIFICATION BY MASS SPECTROMETRY [LARGE SCALE ANALYSIS]</scope>
</reference>
<reference key="10">
    <citation type="journal article" date="2000" name="Nat. Struct. Biol.">
        <title>Crystal structure of human homogentisate dioxygenase.</title>
        <authorList>
            <person name="Titus G.P."/>
            <person name="Mueller H.A."/>
            <person name="Burgner J."/>
            <person name="Rodriguez de Cordoba S."/>
            <person name="Penalva M.A."/>
            <person name="Timm D.E."/>
        </authorList>
    </citation>
    <scope>X-RAY CRYSTALLOGRAPHY (1.9 ANGSTROMS)</scope>
    <scope>METAL-BINDING SITES</scope>
    <scope>SUBUNIT</scope>
    <scope>COFACTOR</scope>
</reference>
<reference key="11">
    <citation type="journal article" date="1997" name="Cytogenet. Cell Genet.">
        <title>Molecular defects in alkaptonuria.</title>
        <authorList>
            <person name="Gehrig A."/>
            <person name="Schmidt S.R."/>
            <person name="Mueller C.R."/>
            <person name="Srsen S."/>
            <person name="Srsnova K."/>
            <person name="Kress W."/>
        </authorList>
    </citation>
    <scope>VARIANT AKU ARG-161</scope>
</reference>
<reference key="12">
    <citation type="journal article" date="1998" name="Am. J. Hum. Genet.">
        <title>Mutation and polymorphism analysis of the human homogentisate 1, 2-dioxygenase gene in alkaptonuria patients.</title>
        <authorList>
            <person name="Beltran-Valero de Bernabe D."/>
            <person name="Granadino B."/>
            <person name="Chiarelli I."/>
            <person name="Porfirio B."/>
            <person name="Mayatepek E."/>
            <person name="Aquaron R."/>
            <person name="Moore M.M."/>
            <person name="Festen J.J.M."/>
            <person name="Sanmarti R."/>
            <person name="Penalva M.A."/>
            <person name="de Cordoba S.R."/>
        </authorList>
    </citation>
    <scope>VARIANTS AKU ALA-42; GLY-97; GLY-153; ILE-189; THR-216; HIS-225; SER-227 AND VAL-368</scope>
</reference>
<reference key="13">
    <citation type="journal article" date="1998" name="Clin. Genet.">
        <title>A novel point mutation associated with alkaptonuria.</title>
        <authorList>
            <person name="Higashino K."/>
            <person name="Liu W."/>
            <person name="Ohkawa T."/>
            <person name="Yamamoto T."/>
            <person name="Fukui K."/>
            <person name="Ohno M."/>
            <person name="Imanishi H."/>
            <person name="Iwasaki A."/>
            <person name="Amuro Y."/>
            <person name="Hada T."/>
        </authorList>
    </citation>
    <scope>VARIANT AKU LYS-168</scope>
</reference>
<reference key="14">
    <citation type="journal article" date="1999" name="Am. J. Hum. Genet.">
        <title>Analysis of alkaptonuria (AKU) mutations and polymorphisms reveals that the CCC sequence motif is a mutational hot spot in the homogentisate 1,2 dioxygenase gene (HGO).</title>
        <authorList>
            <person name="Beltran-Valero de Bernabe D."/>
            <person name="Jimenez F.J."/>
            <person name="Aquaron R."/>
            <person name="Rodriguez de Cordoba S."/>
        </authorList>
    </citation>
    <scope>VARIANTS AKU GLY-60; CYS-62; ASP-122; THR-230 AND GLU-291</scope>
</reference>
<reference key="15">
    <citation type="journal article" date="1999" name="Br. J. Ophthalmol.">
        <title>Ocular ochronosis in alkaptonuria patients carrying mutations in the homogentisate 1,2-dioxygenase gene.</title>
        <authorList>
            <person name="Felbor U."/>
            <person name="Mutsch Y."/>
            <person name="Grehn F."/>
            <person name="Mueller C.R."/>
            <person name="Kress W."/>
        </authorList>
    </citation>
    <scope>VARIANTS AKU PRO-25 AND VAL-368</scope>
    <source>
        <tissue>Leukocyte</tissue>
    </source>
</reference>
<reference key="16">
    <citation type="journal article" date="1999" name="Eur. J. Hum. Genet.">
        <title>Allelic heterogeneity of alkaptonuria in Central Europe.</title>
        <authorList>
            <person name="Mueller C.R."/>
            <person name="Fregin A."/>
            <person name="Srsen S."/>
            <person name="Srsnova K."/>
            <person name="Halliger-Keller B."/>
            <person name="Felbor U."/>
            <person name="Seemanova E."/>
            <person name="Kress W."/>
        </authorList>
    </citation>
    <scope>VARIANTS AKU PRO-25; ARG-161; SER-230; ARG-270; GLY-300 AND VAL-368</scope>
    <source>
        <tissue>Lymphocyte</tissue>
    </source>
</reference>
<reference key="17">
    <citation type="journal article" date="1999" name="J. Med. Genet.">
        <title>Mutational analysis of the HGO gene in Finnish alkaptonuria patients.</title>
        <authorList>
            <person name="Beltran-Valero de Bernabe D."/>
            <person name="Peterson P."/>
            <person name="Luopajarvi K."/>
            <person name="Matintalo P."/>
            <person name="Alho A."/>
            <person name="Konttinen Y."/>
            <person name="Krohn K."/>
            <person name="Rodriguez de Cordoba S."/>
            <person name="Ranki A."/>
        </authorList>
    </citation>
    <scope>VARIANTS AKU SER-330; VAL-368 AND ARG-371</scope>
</reference>
<reference key="18">
    <citation type="journal article" date="2009" name="Hum. Mutat.">
        <title>Mutation spectrum of homogentisic acid oxidase (HGD) in alkaptonuria.</title>
        <authorList>
            <person name="Vilboux T."/>
            <person name="Kayser M."/>
            <person name="Introne W."/>
            <person name="Suwannarat P."/>
            <person name="Bernardini I."/>
            <person name="Fischer R."/>
            <person name="O'Brien K."/>
            <person name="Kleta R."/>
            <person name="Huizing M."/>
            <person name="Gahl W.A."/>
        </authorList>
    </citation>
    <scope>VARIANTS AKU ALA-3; ALA-42; GLY-60; PRO-61; CYS-62; LEU-73; THR-92; ARG-97; PHE-120; TRP-120; VAL-122; ARG-123; PRO-137; LEU-158; ARG-161; ASP-168; LYS-168; ARG-183; GLY-187; TRP-217; LEU-225; SER-230; PRO-258; ARG-269; ARG-270; GLY-300; PRO-321; LEU-359; ARG-360; GLU-362; VAL-368; LEU-373 AND GLN-401</scope>
</reference>
<reference key="19">
    <citation type="journal article" date="2012" name="JIMD Rep.">
        <title>Identification of 11 novel homogentisate 1,2 dioxygenase variants in alkaptonuria patients and establishment of a novel LOVD-based HGD mutation database.</title>
        <authorList>
            <person name="Zatkova A."/>
            <person name="Sedlackova T."/>
            <person name="Radvansky J."/>
            <person name="Polakova H."/>
            <person name="Nemethova M."/>
            <person name="Aquaron R."/>
            <person name="Dursun I."/>
            <person name="Usher J.L."/>
            <person name="Kadasi L."/>
        </authorList>
    </citation>
    <scope>VARIANTS AKU ARG-33; PHE-44; ARG-115; PRO-116; ALA-123; ALA-152; LEU-169; GLY-178; GLY-197; SER-219; ASN-276; ALA-360; ARG-361 AND HIS-374</scope>
</reference>
<reference key="20">
    <citation type="journal article" date="2012" name="Rheumatol. Int.">
        <title>Novel mutations in the homogentisate 1,2 dioxygenase gene identified in Jordanian patients with alkaptonuria.</title>
        <authorList>
            <person name="Al-sbou M."/>
        </authorList>
    </citation>
    <scope>VARIANTS AKU SER-227 AND ASN-369</scope>
</reference>
<reference key="21">
    <citation type="journal article" date="2013" name="Gene">
        <title>First report of HGD mutations in a Chinese with alkaptonuria.</title>
        <authorList>
            <person name="Yang Y.J."/>
            <person name="Guo J.H."/>
            <person name="Chen W.J."/>
            <person name="Zhao R."/>
            <person name="Tang J.S."/>
            <person name="Meng X.H."/>
            <person name="Zhao L."/>
            <person name="Tu M."/>
            <person name="He X.Y."/>
            <person name="Wu L.Q."/>
            <person name="Zhu Y.M."/>
        </authorList>
    </citation>
    <scope>VARIANT AKU CYS-329</scope>
</reference>
<reference key="22">
    <citation type="journal article" date="2014" name="J. Proteomics">
        <title>An enzyme assisted RP-RPLC approach for in-depth analysis of human liver phosphoproteome.</title>
        <authorList>
            <person name="Bian Y."/>
            <person name="Song C."/>
            <person name="Cheng K."/>
            <person name="Dong M."/>
            <person name="Wang F."/>
            <person name="Huang J."/>
            <person name="Sun D."/>
            <person name="Wang L."/>
            <person name="Ye M."/>
            <person name="Zou H."/>
        </authorList>
    </citation>
    <scope>VARIANT [LARGE SCALE ANALYSIS] HIS-80</scope>
    <scope>IDENTIFICATION BY MASS SPECTROMETRY [LARGE SCALE ANALYSIS]</scope>
    <source>
        <tissue>Liver</tissue>
    </source>
</reference>
<reference key="23">
    <citation type="journal article" date="2015" name="JIMD Rep.">
        <title>Analysis of HGD gene mutations in patients with alkaptonuria from the United Kingdom: identification of novel mutations.</title>
        <authorList>
            <person name="Usher J.L."/>
            <person name="Ascher D.B."/>
            <person name="Pires D.E."/>
            <person name="Milan A.M."/>
            <person name="Blundell T.L."/>
            <person name="Ranganath L.R."/>
        </authorList>
    </citation>
    <scope>VARIANTS AKU LYS-13; ASN-18; ALA-42; GLN-53; ARG-115; PHE-120; ARG-123; ARG-161; LEU-169; ASN-171; GLY-197; SER-219; HIS-225; PRO-225; SER-230; PHE-245; ARG-270; ASN-276; GLY-300; ASP-337; LEU-359; ARG-360; ARG-361; VAL-368 AND HIS-374</scope>
    <scope>VARIANT THR-172</scope>
</reference>
<feature type="chain" id="PRO_0000220240" description="Homogentisate 1,2-dioxygenase">
    <location>
        <begin position="1"/>
        <end position="445"/>
    </location>
</feature>
<feature type="binding site" evidence="6 23">
    <location>
        <position position="335"/>
    </location>
    <ligand>
        <name>Fe cation</name>
        <dbReference type="ChEBI" id="CHEBI:24875"/>
    </ligand>
</feature>
<feature type="binding site" evidence="6 23">
    <location>
        <position position="341"/>
    </location>
    <ligand>
        <name>Fe cation</name>
        <dbReference type="ChEBI" id="CHEBI:24875"/>
    </ligand>
</feature>
<feature type="binding site" evidence="6 23">
    <location>
        <position position="371"/>
    </location>
    <ligand>
        <name>Fe cation</name>
        <dbReference type="ChEBI" id="CHEBI:24875"/>
    </ligand>
</feature>
<feature type="modified residue" description="N6-acetyllysine" evidence="24">
    <location>
        <position position="98"/>
    </location>
</feature>
<feature type="modified residue" description="N6-succinyllysine" evidence="1">
    <location>
        <position position="414"/>
    </location>
</feature>
<feature type="sequence variant" id="VAR_073076" description="In AKU; dbSNP:rs200412910." evidence="9">
    <original>E</original>
    <variation>A</variation>
    <location>
        <position position="3"/>
    </location>
</feature>
<feature type="sequence variant" id="VAR_073077" description="In AKU; dbSNP:rs1458752246." evidence="13">
    <original>E</original>
    <variation>K</variation>
    <location>
        <position position="13"/>
    </location>
</feature>
<feature type="sequence variant" id="VAR_073078" description="In AKU." evidence="13">
    <original>D</original>
    <variation>N</variation>
    <location>
        <position position="18"/>
    </location>
</feature>
<feature type="sequence variant" id="VAR_009618" description="In AKU." evidence="3 4">
    <original>L</original>
    <variation>P</variation>
    <location>
        <position position="25"/>
    </location>
</feature>
<feature type="sequence variant" id="VAR_073079" description="In AKU." evidence="12">
    <original>Q</original>
    <variation>R</variation>
    <location>
        <position position="33"/>
    </location>
</feature>
<feature type="sequence variant" id="VAR_005272" description="In AKU; dbSNP:rs373921680." evidence="9 13 17">
    <original>E</original>
    <variation>A</variation>
    <location>
        <position position="42"/>
    </location>
</feature>
<feature type="sequence variant" id="VAR_073080" description="In AKU; dbSNP:rs1049246177." evidence="12">
    <original>L</original>
    <variation>F</variation>
    <location>
        <position position="44"/>
    </location>
</feature>
<feature type="sequence variant" id="VAR_073081" description="In AKU; dbSNP:rs200808744." evidence="13">
    <original>R</original>
    <variation>Q</variation>
    <location>
        <position position="53"/>
    </location>
</feature>
<feature type="sequence variant" id="VAR_005273" description="In AKU." evidence="2 9">
    <original>W</original>
    <variation>G</variation>
    <location>
        <position position="60"/>
    </location>
</feature>
<feature type="sequence variant" id="VAR_073082" description="In AKU; dbSNP:rs1324654414." evidence="9">
    <original>L</original>
    <variation>P</variation>
    <location>
        <position position="61"/>
    </location>
</feature>
<feature type="sequence variant" id="VAR_005274" description="In AKU; dbSNP:rs1174584850." evidence="2 9">
    <original>Y</original>
    <variation>C</variation>
    <location>
        <position position="62"/>
    </location>
</feature>
<feature type="sequence variant" id="VAR_073083" description="In AKU." evidence="9">
    <original>F</original>
    <variation>L</variation>
    <location>
        <position position="73"/>
    </location>
</feature>
<feature type="sequence variant" id="VAR_049353" description="In dbSNP:rs2255543." evidence="7 8 14 16 19 20 25">
    <original>Q</original>
    <variation>H</variation>
    <location>
        <position position="80"/>
    </location>
</feature>
<feature type="sequence variant" id="VAR_073084" description="In AKU." evidence="9">
    <original>P</original>
    <variation>T</variation>
    <location>
        <position position="92"/>
    </location>
</feature>
<feature type="sequence variant" id="VAR_005275" description="In AKU." evidence="17">
    <original>W</original>
    <variation>G</variation>
    <location>
        <position position="97"/>
    </location>
</feature>
<feature type="sequence variant" id="VAR_073085" description="In AKU." evidence="9">
    <original>W</original>
    <variation>R</variation>
    <location>
        <position position="97"/>
    </location>
</feature>
<feature type="sequence variant" id="VAR_073086" description="In AKU; dbSNP:rs755734596." evidence="12 13">
    <original>G</original>
    <variation>R</variation>
    <location>
        <position position="115"/>
    </location>
</feature>
<feature type="sequence variant" id="VAR_073087" description="In AKU; dbSNP:rs569846003." evidence="12">
    <original>L</original>
    <variation>P</variation>
    <location>
        <position position="116"/>
    </location>
</feature>
<feature type="sequence variant" id="VAR_073088" description="In AKU; dbSNP:rs752153829." evidence="9 13">
    <original>C</original>
    <variation>F</variation>
    <location>
        <position position="120"/>
    </location>
</feature>
<feature type="sequence variant" id="VAR_073089" description="In AKU; dbSNP:rs149165166." evidence="9">
    <original>C</original>
    <variation>W</variation>
    <location>
        <position position="120"/>
    </location>
</feature>
<feature type="sequence variant" id="VAR_005276" description="In AKU; dbSNP:rs544956641." evidence="2">
    <original>A</original>
    <variation>D</variation>
    <location>
        <position position="122"/>
    </location>
</feature>
<feature type="sequence variant" id="VAR_073090" description="In AKU; dbSNP:rs544956641." evidence="9">
    <original>A</original>
    <variation>V</variation>
    <location>
        <position position="122"/>
    </location>
</feature>
<feature type="sequence variant" id="VAR_073091" description="In AKU; dbSNP:rs374473331." evidence="12">
    <original>G</original>
    <variation>A</variation>
    <location>
        <position position="123"/>
    </location>
</feature>
<feature type="sequence variant" id="VAR_073092" description="In AKU; dbSNP:rs564979861." evidence="9 13">
    <original>G</original>
    <variation>R</variation>
    <location>
        <position position="123"/>
    </location>
</feature>
<feature type="sequence variant" id="VAR_073093" description="In AKU." evidence="9">
    <original>L</original>
    <variation>P</variation>
    <location>
        <position position="137"/>
    </location>
</feature>
<feature type="sequence variant" id="VAR_073094" description="In AKU; dbSNP:rs1553717936." evidence="12">
    <original>G</original>
    <variation>A</variation>
    <location>
        <position position="152"/>
    </location>
</feature>
<feature type="sequence variant" id="VAR_005277" description="In AKU; dbSNP:rs775274569." evidence="17">
    <original>D</original>
    <variation>G</variation>
    <location>
        <position position="153"/>
    </location>
</feature>
<feature type="sequence variant" id="VAR_073095" description="In AKU; dbSNP:rs375396766." evidence="9">
    <original>P</original>
    <variation>L</variation>
    <location>
        <position position="158"/>
    </location>
</feature>
<feature type="sequence variant" id="VAR_005278" description="In AKU; loss of activity; most prevalent mutation in Slovak and Czech patients; dbSNP:rs28941783." evidence="4 9 13 15">
    <original>G</original>
    <variation>R</variation>
    <location>
        <position position="161"/>
    </location>
</feature>
<feature type="sequence variant" id="VAR_073096" description="In AKU; dbSNP:rs780173554." evidence="9">
    <original>E</original>
    <variation>D</variation>
    <location>
        <position position="168"/>
    </location>
</feature>
<feature type="sequence variant" id="VAR_009619" description="In AKU; loss of activity; dbSNP:rs375283568." evidence="9 18">
    <original>E</original>
    <variation>K</variation>
    <location>
        <position position="168"/>
    </location>
</feature>
<feature type="sequence variant" id="VAR_073097" description="In AKU; dbSNP:rs756134838." evidence="12 13">
    <original>F</original>
    <variation>L</variation>
    <location>
        <position position="169"/>
    </location>
</feature>
<feature type="sequence variant" id="VAR_073098" description="In AKU." evidence="13">
    <original>K</original>
    <variation>N</variation>
    <location>
        <position position="171"/>
    </location>
</feature>
<feature type="sequence variant" id="VAR_073099" evidence="13">
    <original>M</original>
    <variation>T</variation>
    <location>
        <position position="172"/>
    </location>
</feature>
<feature type="sequence variant" id="VAR_073100" description="In AKU." evidence="12">
    <original>E</original>
    <variation>G</variation>
    <location>
        <position position="178"/>
    </location>
</feature>
<feature type="sequence variant" id="VAR_073101" description="In AKU; dbSNP:rs1349543050." evidence="9">
    <original>Q</original>
    <variation>R</variation>
    <location>
        <position position="183"/>
    </location>
</feature>
<feature type="sequence variant" id="VAR_073102" description="In AKU; dbSNP:rs756255206." evidence="9">
    <original>R</original>
    <variation>G</variation>
    <location>
        <position position="187"/>
    </location>
</feature>
<feature type="sequence variant" id="VAR_005279" description="In AKU; dbSNP:rs2107510544." evidence="17">
    <original>S</original>
    <variation>I</variation>
    <location>
        <position position="189"/>
    </location>
</feature>
<feature type="sequence variant" id="VAR_073103" description="In AKU; dbSNP:rs1414279737." evidence="12 13">
    <original>R</original>
    <variation>G</variation>
    <location>
        <position position="197"/>
    </location>
</feature>
<feature type="sequence variant" id="VAR_005280" description="In AKU; dbSNP:rs767201131." evidence="17">
    <original>I</original>
    <variation>T</variation>
    <location>
        <position position="216"/>
    </location>
</feature>
<feature type="sequence variant" id="VAR_073104" description="In AKU." evidence="9">
    <original>G</original>
    <variation>W</variation>
    <location>
        <position position="217"/>
    </location>
</feature>
<feature type="sequence variant" id="VAR_073105" description="In AKU." evidence="12 13">
    <original>N</original>
    <variation>S</variation>
    <location>
        <position position="219"/>
    </location>
</feature>
<feature type="sequence variant" id="VAR_005281" description="In AKU; dbSNP:rs562853291." evidence="13 17">
    <original>R</original>
    <variation>H</variation>
    <location>
        <position position="225"/>
    </location>
</feature>
<feature type="sequence variant" id="VAR_073106" description="In AKU; dbSNP:rs562853291." evidence="9">
    <original>R</original>
    <variation>L</variation>
    <location>
        <position position="225"/>
    </location>
</feature>
<feature type="sequence variant" id="VAR_073107" description="In AKU; dbSNP:rs562853291." evidence="13">
    <original>R</original>
    <variation>P</variation>
    <location>
        <position position="225"/>
    </location>
</feature>
<feature type="sequence variant" id="VAR_005282" description="In AKU; dbSNP:rs1941093400." evidence="10 17">
    <original>F</original>
    <variation>S</variation>
    <location>
        <position position="227"/>
    </location>
</feature>
<feature type="sequence variant" id="VAR_005283" description="In AKU; complete loss of activity; dbSNP:rs28942100." evidence="4 9 13 14">
    <original>P</original>
    <variation>S</variation>
    <location>
        <position position="230"/>
    </location>
</feature>
<feature type="sequence variant" id="VAR_005284" description="In AKU." evidence="2">
    <original>P</original>
    <variation>T</variation>
    <location>
        <position position="230"/>
    </location>
</feature>
<feature type="sequence variant" id="VAR_073108" description="In AKU." evidence="13">
    <original>V</original>
    <variation>F</variation>
    <location>
        <position position="245"/>
    </location>
</feature>
<feature type="sequence variant" id="VAR_073109" description="In AKU; dbSNP:rs759843592." evidence="9">
    <original>Q</original>
    <variation>P</variation>
    <location>
        <position position="258"/>
    </location>
</feature>
<feature type="sequence variant" id="VAR_073110" description="In AKU; dbSNP:rs756522409." evidence="9">
    <original>H</original>
    <variation>R</variation>
    <location>
        <position position="269"/>
    </location>
</feature>
<feature type="sequence variant" id="VAR_009620" description="In AKU; dbSNP:rs120074174." evidence="4 9 13">
    <original>G</original>
    <variation>R</variation>
    <location>
        <position position="270"/>
    </location>
</feature>
<feature type="sequence variant" id="VAR_073111" description="In AKU; dbSNP:rs1160502581." evidence="12 13">
    <original>K</original>
    <variation>N</variation>
    <location>
        <position position="276"/>
    </location>
</feature>
<feature type="sequence variant" id="VAR_005285" description="In AKU; dbSNP:rs754428438." evidence="2">
    <original>D</original>
    <variation>E</variation>
    <location>
        <position position="291"/>
    </location>
</feature>
<feature type="sequence variant" id="VAR_005286" description="In AKU; dbSNP:rs120074170." evidence="4 9 13 14">
    <original>V</original>
    <variation>G</variation>
    <location>
        <position position="300"/>
    </location>
</feature>
<feature type="sequence variant" id="VAR_073112" description="In AKU." evidence="9">
    <original>R</original>
    <variation>P</variation>
    <location>
        <position position="321"/>
    </location>
</feature>
<feature type="sequence variant" id="VAR_073113" description="In AKU." evidence="11">
    <original>F</original>
    <variation>C</variation>
    <location>
        <position position="329"/>
    </location>
</feature>
<feature type="sequence variant" id="VAR_008744" description="In AKU; dbSNP:rs120074171." evidence="5">
    <original>R</original>
    <variation>S</variation>
    <location>
        <position position="330"/>
    </location>
</feature>
<feature type="sequence variant" id="VAR_073114" description="In AKU." evidence="13">
    <original>N</original>
    <variation>D</variation>
    <location>
        <position position="337"/>
    </location>
</feature>
<feature type="sequence variant" id="VAR_073115" description="In AKU; dbSNP:rs764037565." evidence="9 13">
    <original>P</original>
    <variation>L</variation>
    <location>
        <position position="359"/>
    </location>
</feature>
<feature type="sequence variant" id="VAR_073116" description="In AKU." evidence="12">
    <original>G</original>
    <variation>A</variation>
    <location>
        <position position="360"/>
    </location>
</feature>
<feature type="sequence variant" id="VAR_073117" description="In AKU; dbSNP:rs368717991." evidence="9 13">
    <original>G</original>
    <variation>R</variation>
    <location>
        <position position="360"/>
    </location>
</feature>
<feature type="sequence variant" id="VAR_073118" description="In AKU; dbSNP:rs765219004." evidence="12 13">
    <original>G</original>
    <variation>R</variation>
    <location>
        <position position="361"/>
    </location>
</feature>
<feature type="sequence variant" id="VAR_073119" description="In AKU." evidence="9">
    <original>G</original>
    <variation>E</variation>
    <location>
        <position position="362"/>
    </location>
</feature>
<feature type="sequence variant" id="VAR_005287" description="In AKU; loss of activity; dbSNP:rs120074173." evidence="3 4 5 9 13 17">
    <original>M</original>
    <variation>V</variation>
    <location>
        <position position="368"/>
    </location>
</feature>
<feature type="sequence variant" id="VAR_073120" description="In AKU; dbSNP:rs765912447." evidence="10">
    <original>T</original>
    <variation>N</variation>
    <location>
        <position position="369"/>
    </location>
</feature>
<feature type="sequence variant" id="VAR_008745" description="In AKU; dbSNP:rs120074172." evidence="5">
    <original>H</original>
    <variation>R</variation>
    <location>
        <position position="371"/>
    </location>
</feature>
<feature type="sequence variant" id="VAR_073121" description="In AKU; dbSNP:rs138558042." evidence="9">
    <original>P</original>
    <variation>L</variation>
    <location>
        <position position="373"/>
    </location>
</feature>
<feature type="sequence variant" id="VAR_073122" description="In AKU; dbSNP:rs981454067." evidence="12 13">
    <original>D</original>
    <variation>H</variation>
    <location>
        <position position="374"/>
    </location>
</feature>
<feature type="sequence variant" id="VAR_073123" description="In AKU; dbSNP:rs767159114." evidence="9">
    <original>E</original>
    <variation>Q</variation>
    <location>
        <position position="401"/>
    </location>
</feature>
<feature type="sequence conflict" description="In Ref. 4; BAF83471." evidence="21" ref="4">
    <original>K</original>
    <variation>R</variation>
    <location>
        <position position="383"/>
    </location>
</feature>
<feature type="strand" evidence="26">
    <location>
        <begin position="6"/>
        <end position="8"/>
    </location>
</feature>
<feature type="strand" evidence="26">
    <location>
        <begin position="14"/>
        <end position="17"/>
    </location>
</feature>
<feature type="helix" evidence="26">
    <location>
        <begin position="36"/>
        <end position="38"/>
    </location>
</feature>
<feature type="strand" evidence="26">
    <location>
        <begin position="40"/>
        <end position="47"/>
    </location>
</feature>
<feature type="helix" evidence="26">
    <location>
        <begin position="53"/>
        <end position="55"/>
    </location>
</feature>
<feature type="strand" evidence="26">
    <location>
        <begin position="58"/>
        <end position="65"/>
    </location>
</feature>
<feature type="helix" evidence="26">
    <location>
        <begin position="85"/>
        <end position="87"/>
    </location>
</feature>
<feature type="strand" evidence="26">
    <location>
        <begin position="95"/>
        <end position="97"/>
    </location>
</feature>
<feature type="turn" evidence="26">
    <location>
        <begin position="105"/>
        <end position="107"/>
    </location>
</feature>
<feature type="turn" evidence="26">
    <location>
        <begin position="112"/>
        <end position="115"/>
    </location>
</feature>
<feature type="strand" evidence="26">
    <location>
        <begin position="116"/>
        <end position="123"/>
    </location>
</feature>
<feature type="helix" evidence="26">
    <location>
        <begin position="125"/>
        <end position="127"/>
    </location>
</feature>
<feature type="strand" evidence="26">
    <location>
        <begin position="131"/>
        <end position="138"/>
    </location>
</feature>
<feature type="strand" evidence="26">
    <location>
        <begin position="144"/>
        <end position="161"/>
    </location>
</feature>
<feature type="strand" evidence="26">
    <location>
        <begin position="163"/>
        <end position="167"/>
    </location>
</feature>
<feature type="strand" evidence="26">
    <location>
        <begin position="170"/>
        <end position="174"/>
    </location>
</feature>
<feature type="strand" evidence="26">
    <location>
        <begin position="178"/>
        <end position="182"/>
    </location>
</feature>
<feature type="strand" evidence="26">
    <location>
        <begin position="188"/>
        <end position="191"/>
    </location>
</feature>
<feature type="strand" evidence="26">
    <location>
        <begin position="193"/>
        <end position="205"/>
    </location>
</feature>
<feature type="helix" evidence="26">
    <location>
        <begin position="214"/>
        <end position="216"/>
    </location>
</feature>
<feature type="helix" evidence="26">
    <location>
        <begin position="224"/>
        <end position="226"/>
    </location>
</feature>
<feature type="strand" evidence="26">
    <location>
        <begin position="227"/>
        <end position="230"/>
    </location>
</feature>
<feature type="strand" evidence="26">
    <location>
        <begin position="238"/>
        <end position="249"/>
    </location>
</feature>
<feature type="strand" evidence="26">
    <location>
        <begin position="252"/>
        <end position="260"/>
    </location>
</feature>
<feature type="strand" evidence="26">
    <location>
        <begin position="265"/>
        <end position="271"/>
    </location>
</feature>
<feature type="strand" evidence="26">
    <location>
        <begin position="275"/>
        <end position="278"/>
    </location>
</feature>
<feature type="helix" evidence="26">
    <location>
        <begin position="279"/>
        <end position="281"/>
    </location>
</feature>
<feature type="strand" evidence="26">
    <location>
        <begin position="288"/>
        <end position="291"/>
    </location>
</feature>
<feature type="helix" evidence="26">
    <location>
        <begin position="295"/>
        <end position="298"/>
    </location>
</feature>
<feature type="strand" evidence="26">
    <location>
        <begin position="299"/>
        <end position="304"/>
    </location>
</feature>
<feature type="strand" evidence="26">
    <location>
        <begin position="311"/>
        <end position="318"/>
    </location>
</feature>
<feature type="strand" evidence="26">
    <location>
        <begin position="320"/>
        <end position="323"/>
    </location>
</feature>
<feature type="strand" evidence="26">
    <location>
        <begin position="326"/>
        <end position="328"/>
    </location>
</feature>
<feature type="strand" evidence="26">
    <location>
        <begin position="340"/>
        <end position="347"/>
    </location>
</feature>
<feature type="strand" evidence="26">
    <location>
        <begin position="362"/>
        <end position="365"/>
    </location>
</feature>
<feature type="helix" evidence="26">
    <location>
        <begin position="375"/>
        <end position="383"/>
    </location>
</feature>
<feature type="strand" evidence="26">
    <location>
        <begin position="389"/>
        <end position="392"/>
    </location>
</feature>
<feature type="strand" evidence="26">
    <location>
        <begin position="396"/>
        <end position="404"/>
    </location>
</feature>
<feature type="helix" evidence="26">
    <location>
        <begin position="410"/>
        <end position="415"/>
    </location>
</feature>
<proteinExistence type="evidence at protein level"/>
<dbReference type="EC" id="1.13.11.5" evidence="14"/>
<dbReference type="EMBL" id="U63008">
    <property type="protein sequence ID" value="AAB16836.1"/>
    <property type="molecule type" value="mRNA"/>
</dbReference>
<dbReference type="EMBL" id="Z75048">
    <property type="protein sequence ID" value="CAA99340.1"/>
    <property type="molecule type" value="mRNA"/>
</dbReference>
<dbReference type="EMBL" id="AF000573">
    <property type="protein sequence ID" value="AAC51650.1"/>
    <property type="molecule type" value="Genomic_DNA"/>
</dbReference>
<dbReference type="EMBL" id="AF045167">
    <property type="protein sequence ID" value="AAC02698.1"/>
    <property type="molecule type" value="mRNA"/>
</dbReference>
<dbReference type="EMBL" id="AK290782">
    <property type="protein sequence ID" value="BAF83471.1"/>
    <property type="molecule type" value="mRNA"/>
</dbReference>
<dbReference type="EMBL" id="AK313563">
    <property type="protein sequence ID" value="BAG36337.1"/>
    <property type="molecule type" value="mRNA"/>
</dbReference>
<dbReference type="EMBL" id="AC126182">
    <property type="status" value="NOT_ANNOTATED_CDS"/>
    <property type="molecule type" value="Genomic_DNA"/>
</dbReference>
<dbReference type="EMBL" id="AC133474">
    <property type="status" value="NOT_ANNOTATED_CDS"/>
    <property type="molecule type" value="Genomic_DNA"/>
</dbReference>
<dbReference type="EMBL" id="CH471052">
    <property type="protein sequence ID" value="EAW79524.1"/>
    <property type="molecule type" value="Genomic_DNA"/>
</dbReference>
<dbReference type="EMBL" id="BC071757">
    <property type="protein sequence ID" value="AAH71757.1"/>
    <property type="molecule type" value="mRNA"/>
</dbReference>
<dbReference type="CCDS" id="CCDS3000.1"/>
<dbReference type="RefSeq" id="NP_000178.2">
    <property type="nucleotide sequence ID" value="NM_000187.4"/>
</dbReference>
<dbReference type="PDB" id="1EY2">
    <property type="method" value="X-ray"/>
    <property type="resolution" value="2.30 A"/>
    <property type="chains" value="A=1-445"/>
</dbReference>
<dbReference type="PDB" id="1EYB">
    <property type="method" value="X-ray"/>
    <property type="resolution" value="1.90 A"/>
    <property type="chains" value="A=1-445"/>
</dbReference>
<dbReference type="PDBsum" id="1EY2"/>
<dbReference type="PDBsum" id="1EYB"/>
<dbReference type="SMR" id="Q93099"/>
<dbReference type="BioGRID" id="109329">
    <property type="interactions" value="8"/>
</dbReference>
<dbReference type="FunCoup" id="Q93099">
    <property type="interactions" value="255"/>
</dbReference>
<dbReference type="IntAct" id="Q93099">
    <property type="interactions" value="6"/>
</dbReference>
<dbReference type="MINT" id="Q93099"/>
<dbReference type="STRING" id="9606.ENSP00000283871"/>
<dbReference type="GlyGen" id="Q93099">
    <property type="glycosylation" value="1 site, 1 O-linked glycan (1 site)"/>
</dbReference>
<dbReference type="iPTMnet" id="Q93099"/>
<dbReference type="PhosphoSitePlus" id="Q93099"/>
<dbReference type="BioMuta" id="HGD"/>
<dbReference type="jPOST" id="Q93099"/>
<dbReference type="MassIVE" id="Q93099"/>
<dbReference type="PaxDb" id="9606-ENSP00000283871"/>
<dbReference type="PeptideAtlas" id="Q93099"/>
<dbReference type="ProteomicsDB" id="75725"/>
<dbReference type="Antibodypedia" id="32802">
    <property type="antibodies" value="246 antibodies from 30 providers"/>
</dbReference>
<dbReference type="DNASU" id="3081"/>
<dbReference type="Ensembl" id="ENST00000283871.10">
    <property type="protein sequence ID" value="ENSP00000283871.5"/>
    <property type="gene ID" value="ENSG00000113924.12"/>
</dbReference>
<dbReference type="GeneID" id="3081"/>
<dbReference type="KEGG" id="hsa:3081"/>
<dbReference type="MANE-Select" id="ENST00000283871.10">
    <property type="protein sequence ID" value="ENSP00000283871.5"/>
    <property type="RefSeq nucleotide sequence ID" value="NM_000187.4"/>
    <property type="RefSeq protein sequence ID" value="NP_000178.2"/>
</dbReference>
<dbReference type="UCSC" id="uc003edw.4">
    <property type="organism name" value="human"/>
</dbReference>
<dbReference type="AGR" id="HGNC:4892"/>
<dbReference type="CTD" id="3081"/>
<dbReference type="DisGeNET" id="3081"/>
<dbReference type="GeneCards" id="HGD"/>
<dbReference type="GeneReviews" id="HGD"/>
<dbReference type="HGNC" id="HGNC:4892">
    <property type="gene designation" value="HGD"/>
</dbReference>
<dbReference type="HPA" id="ENSG00000113924">
    <property type="expression patterns" value="Group enriched (kidney, liver)"/>
</dbReference>
<dbReference type="MalaCards" id="HGD"/>
<dbReference type="MIM" id="203500">
    <property type="type" value="phenotype"/>
</dbReference>
<dbReference type="MIM" id="607474">
    <property type="type" value="gene"/>
</dbReference>
<dbReference type="neXtProt" id="NX_Q93099"/>
<dbReference type="OpenTargets" id="ENSG00000113924"/>
<dbReference type="Orphanet" id="56">
    <property type="disease" value="Alkaptonuria"/>
</dbReference>
<dbReference type="PharmGKB" id="PA29268"/>
<dbReference type="VEuPathDB" id="HostDB:ENSG00000113924"/>
<dbReference type="eggNOG" id="KOG1417">
    <property type="taxonomic scope" value="Eukaryota"/>
</dbReference>
<dbReference type="GeneTree" id="ENSGT00390000004601"/>
<dbReference type="HOGENOM" id="CLU_027174_0_0_1"/>
<dbReference type="InParanoid" id="Q93099"/>
<dbReference type="OMA" id="MLPHGPD"/>
<dbReference type="OrthoDB" id="1689029at2759"/>
<dbReference type="PAN-GO" id="Q93099">
    <property type="GO annotations" value="2 GO annotations based on evolutionary models"/>
</dbReference>
<dbReference type="PhylomeDB" id="Q93099"/>
<dbReference type="TreeFam" id="TF300490"/>
<dbReference type="BioCyc" id="MetaCyc:HS03728-MONOMER"/>
<dbReference type="BRENDA" id="1.13.11.5">
    <property type="organism ID" value="2681"/>
</dbReference>
<dbReference type="PathwayCommons" id="Q93099"/>
<dbReference type="Reactome" id="R-HSA-8963684">
    <property type="pathway name" value="Tyrosine catabolism"/>
</dbReference>
<dbReference type="SignaLink" id="Q93099"/>
<dbReference type="UniPathway" id="UPA00139">
    <property type="reaction ID" value="UER00339"/>
</dbReference>
<dbReference type="BioGRID-ORCS" id="3081">
    <property type="hits" value="13 hits in 1144 CRISPR screens"/>
</dbReference>
<dbReference type="ChiTaRS" id="HGD">
    <property type="organism name" value="human"/>
</dbReference>
<dbReference type="EvolutionaryTrace" id="Q93099"/>
<dbReference type="GenomeRNAi" id="3081"/>
<dbReference type="Pharos" id="Q93099">
    <property type="development level" value="Tbio"/>
</dbReference>
<dbReference type="PRO" id="PR:Q93099"/>
<dbReference type="Proteomes" id="UP000005640">
    <property type="component" value="Chromosome 3"/>
</dbReference>
<dbReference type="RNAct" id="Q93099">
    <property type="molecule type" value="protein"/>
</dbReference>
<dbReference type="Bgee" id="ENSG00000113924">
    <property type="expression patterns" value="Expressed in right lobe of liver and 141 other cell types or tissues"/>
</dbReference>
<dbReference type="ExpressionAtlas" id="Q93099">
    <property type="expression patterns" value="baseline and differential"/>
</dbReference>
<dbReference type="GO" id="GO:0005829">
    <property type="term" value="C:cytosol"/>
    <property type="evidence" value="ECO:0000304"/>
    <property type="project" value="Reactome"/>
</dbReference>
<dbReference type="GO" id="GO:0070062">
    <property type="term" value="C:extracellular exosome"/>
    <property type="evidence" value="ECO:0007005"/>
    <property type="project" value="UniProtKB"/>
</dbReference>
<dbReference type="GO" id="GO:0004411">
    <property type="term" value="F:homogentisate 1,2-dioxygenase activity"/>
    <property type="evidence" value="ECO:0000315"/>
    <property type="project" value="UniProtKB"/>
</dbReference>
<dbReference type="GO" id="GO:0042802">
    <property type="term" value="F:identical protein binding"/>
    <property type="evidence" value="ECO:0000353"/>
    <property type="project" value="IntAct"/>
</dbReference>
<dbReference type="GO" id="GO:0046872">
    <property type="term" value="F:metal ion binding"/>
    <property type="evidence" value="ECO:0007669"/>
    <property type="project" value="UniProtKB-KW"/>
</dbReference>
<dbReference type="GO" id="GO:0006559">
    <property type="term" value="P:L-phenylalanine catabolic process"/>
    <property type="evidence" value="ECO:0000318"/>
    <property type="project" value="GO_Central"/>
</dbReference>
<dbReference type="GO" id="GO:0006572">
    <property type="term" value="P:tyrosine catabolic process"/>
    <property type="evidence" value="ECO:0000304"/>
    <property type="project" value="ProtInc"/>
</dbReference>
<dbReference type="CDD" id="cd07000">
    <property type="entry name" value="cupin_HGO_N"/>
    <property type="match status" value="1"/>
</dbReference>
<dbReference type="FunFam" id="2.60.120.10:FF:000026">
    <property type="entry name" value="Homogentisate 1,2-dioxygenase"/>
    <property type="match status" value="1"/>
</dbReference>
<dbReference type="Gene3D" id="2.60.120.10">
    <property type="entry name" value="Jelly Rolls"/>
    <property type="match status" value="1"/>
</dbReference>
<dbReference type="InterPro" id="IPR046451">
    <property type="entry name" value="HgmA_C"/>
</dbReference>
<dbReference type="InterPro" id="IPR046452">
    <property type="entry name" value="HgmA_N"/>
</dbReference>
<dbReference type="InterPro" id="IPR005708">
    <property type="entry name" value="Homogentis_dOase"/>
</dbReference>
<dbReference type="InterPro" id="IPR014710">
    <property type="entry name" value="RmlC-like_jellyroll"/>
</dbReference>
<dbReference type="InterPro" id="IPR011051">
    <property type="entry name" value="RmlC_Cupin_sf"/>
</dbReference>
<dbReference type="NCBIfam" id="TIGR01015">
    <property type="entry name" value="hmgA"/>
    <property type="match status" value="1"/>
</dbReference>
<dbReference type="PANTHER" id="PTHR11056">
    <property type="entry name" value="HOMOGENTISATE 1,2-DIOXYGENASE"/>
    <property type="match status" value="1"/>
</dbReference>
<dbReference type="PANTHER" id="PTHR11056:SF0">
    <property type="entry name" value="HOMOGENTISATE 1,2-DIOXYGENASE"/>
    <property type="match status" value="1"/>
</dbReference>
<dbReference type="Pfam" id="PF04209">
    <property type="entry name" value="HgmA_C"/>
    <property type="match status" value="1"/>
</dbReference>
<dbReference type="Pfam" id="PF20510">
    <property type="entry name" value="HgmA_N"/>
    <property type="match status" value="1"/>
</dbReference>
<dbReference type="SUPFAM" id="SSF51182">
    <property type="entry name" value="RmlC-like cupins"/>
    <property type="match status" value="1"/>
</dbReference>
<organism>
    <name type="scientific">Homo sapiens</name>
    <name type="common">Human</name>
    <dbReference type="NCBI Taxonomy" id="9606"/>
    <lineage>
        <taxon>Eukaryota</taxon>
        <taxon>Metazoa</taxon>
        <taxon>Chordata</taxon>
        <taxon>Craniata</taxon>
        <taxon>Vertebrata</taxon>
        <taxon>Euteleostomi</taxon>
        <taxon>Mammalia</taxon>
        <taxon>Eutheria</taxon>
        <taxon>Euarchontoglires</taxon>
        <taxon>Primates</taxon>
        <taxon>Haplorrhini</taxon>
        <taxon>Catarrhini</taxon>
        <taxon>Hominidae</taxon>
        <taxon>Homo</taxon>
    </lineage>
</organism>
<evidence type="ECO:0000250" key="1">
    <source>
        <dbReference type="UniProtKB" id="O09173"/>
    </source>
</evidence>
<evidence type="ECO:0000269" key="2">
    <source>
    </source>
</evidence>
<evidence type="ECO:0000269" key="3">
    <source>
    </source>
</evidence>
<evidence type="ECO:0000269" key="4">
    <source>
    </source>
</evidence>
<evidence type="ECO:0000269" key="5">
    <source>
    </source>
</evidence>
<evidence type="ECO:0000269" key="6">
    <source>
    </source>
</evidence>
<evidence type="ECO:0000269" key="7">
    <source>
    </source>
</evidence>
<evidence type="ECO:0000269" key="8">
    <source>
    </source>
</evidence>
<evidence type="ECO:0000269" key="9">
    <source>
    </source>
</evidence>
<evidence type="ECO:0000269" key="10">
    <source>
    </source>
</evidence>
<evidence type="ECO:0000269" key="11">
    <source>
    </source>
</evidence>
<evidence type="ECO:0000269" key="12">
    <source>
    </source>
</evidence>
<evidence type="ECO:0000269" key="13">
    <source>
    </source>
</evidence>
<evidence type="ECO:0000269" key="14">
    <source>
    </source>
</evidence>
<evidence type="ECO:0000269" key="15">
    <source>
    </source>
</evidence>
<evidence type="ECO:0000269" key="16">
    <source>
    </source>
</evidence>
<evidence type="ECO:0000269" key="17">
    <source>
    </source>
</evidence>
<evidence type="ECO:0000269" key="18">
    <source>
    </source>
</evidence>
<evidence type="ECO:0000269" key="19">
    <source ref="2"/>
</evidence>
<evidence type="ECO:0000269" key="20">
    <source ref="6"/>
</evidence>
<evidence type="ECO:0000305" key="21"/>
<evidence type="ECO:0000305" key="22">
    <source>
    </source>
</evidence>
<evidence type="ECO:0007744" key="23">
    <source>
        <dbReference type="PDB" id="1EY2"/>
    </source>
</evidence>
<evidence type="ECO:0007744" key="24">
    <source>
    </source>
</evidence>
<evidence type="ECO:0007744" key="25">
    <source>
    </source>
</evidence>
<evidence type="ECO:0007829" key="26">
    <source>
        <dbReference type="PDB" id="1EYB"/>
    </source>
</evidence>
<gene>
    <name type="primary">HGD</name>
    <name type="synonym">HGO</name>
</gene>
<name>HGD_HUMAN</name>